<dbReference type="EMBL" id="CP000872">
    <property type="protein sequence ID" value="ABX61368.1"/>
    <property type="molecule type" value="Genomic_DNA"/>
</dbReference>
<dbReference type="SMR" id="A9M7V8"/>
<dbReference type="KEGG" id="bcs:BCAN_A0276"/>
<dbReference type="HOGENOM" id="CLU_072144_1_0_5"/>
<dbReference type="PhylomeDB" id="A9M7V8"/>
<dbReference type="Proteomes" id="UP000001385">
    <property type="component" value="Chromosome I"/>
</dbReference>
<dbReference type="GO" id="GO:0005737">
    <property type="term" value="C:cytoplasm"/>
    <property type="evidence" value="ECO:0007669"/>
    <property type="project" value="UniProtKB-SubCell"/>
</dbReference>
<dbReference type="GO" id="GO:0005525">
    <property type="term" value="F:GTP binding"/>
    <property type="evidence" value="ECO:0007669"/>
    <property type="project" value="UniProtKB-KW"/>
</dbReference>
<dbReference type="GO" id="GO:0003924">
    <property type="term" value="F:GTPase activity"/>
    <property type="evidence" value="ECO:0007669"/>
    <property type="project" value="InterPro"/>
</dbReference>
<dbReference type="GO" id="GO:0016151">
    <property type="term" value="F:nickel cation binding"/>
    <property type="evidence" value="ECO:0007669"/>
    <property type="project" value="UniProtKB-UniRule"/>
</dbReference>
<dbReference type="GO" id="GO:0043419">
    <property type="term" value="P:urea catabolic process"/>
    <property type="evidence" value="ECO:0007669"/>
    <property type="project" value="InterPro"/>
</dbReference>
<dbReference type="CDD" id="cd05540">
    <property type="entry name" value="UreG"/>
    <property type="match status" value="1"/>
</dbReference>
<dbReference type="FunFam" id="3.40.50.300:FF:000208">
    <property type="entry name" value="Urease accessory protein UreG"/>
    <property type="match status" value="1"/>
</dbReference>
<dbReference type="Gene3D" id="3.40.50.300">
    <property type="entry name" value="P-loop containing nucleotide triphosphate hydrolases"/>
    <property type="match status" value="1"/>
</dbReference>
<dbReference type="HAMAP" id="MF_01389">
    <property type="entry name" value="UreG"/>
    <property type="match status" value="1"/>
</dbReference>
<dbReference type="InterPro" id="IPR003495">
    <property type="entry name" value="CobW/HypB/UreG_nucleotide-bd"/>
</dbReference>
<dbReference type="InterPro" id="IPR027417">
    <property type="entry name" value="P-loop_NTPase"/>
</dbReference>
<dbReference type="InterPro" id="IPR004400">
    <property type="entry name" value="UreG"/>
</dbReference>
<dbReference type="NCBIfam" id="TIGR00101">
    <property type="entry name" value="ureG"/>
    <property type="match status" value="1"/>
</dbReference>
<dbReference type="PANTHER" id="PTHR31715">
    <property type="entry name" value="UREASE ACCESSORY PROTEIN G"/>
    <property type="match status" value="1"/>
</dbReference>
<dbReference type="PANTHER" id="PTHR31715:SF0">
    <property type="entry name" value="UREASE ACCESSORY PROTEIN G"/>
    <property type="match status" value="1"/>
</dbReference>
<dbReference type="Pfam" id="PF02492">
    <property type="entry name" value="cobW"/>
    <property type="match status" value="1"/>
</dbReference>
<dbReference type="PIRSF" id="PIRSF005624">
    <property type="entry name" value="Ni-bind_GTPase"/>
    <property type="match status" value="1"/>
</dbReference>
<dbReference type="SUPFAM" id="SSF52540">
    <property type="entry name" value="P-loop containing nucleoside triphosphate hydrolases"/>
    <property type="match status" value="1"/>
</dbReference>
<proteinExistence type="inferred from homology"/>
<keyword id="KW-0143">Chaperone</keyword>
<keyword id="KW-0963">Cytoplasm</keyword>
<keyword id="KW-0342">GTP-binding</keyword>
<keyword id="KW-0996">Nickel insertion</keyword>
<keyword id="KW-0547">Nucleotide-binding</keyword>
<keyword id="KW-1185">Reference proteome</keyword>
<comment type="function">
    <text evidence="1">Facilitates the functional incorporation of the urease nickel metallocenter. This process requires GTP hydrolysis, probably effectuated by UreG.</text>
</comment>
<comment type="subunit">
    <text evidence="1">Homodimer. UreD, UreF and UreG form a complex that acts as a GTP-hydrolysis-dependent molecular chaperone, activating the urease apoprotein by helping to assemble the nickel containing metallocenter of UreC. The UreE protein probably delivers the nickel.</text>
</comment>
<comment type="subcellular location">
    <subcellularLocation>
        <location evidence="1">Cytoplasm</location>
    </subcellularLocation>
</comment>
<comment type="similarity">
    <text evidence="1">Belongs to the SIMIBI class G3E GTPase family. UreG subfamily.</text>
</comment>
<name>UREG1_BRUC2</name>
<reference key="1">
    <citation type="submission" date="2007-10" db="EMBL/GenBank/DDBJ databases">
        <title>Brucella canis ATCC 23365 whole genome shotgun sequencing project.</title>
        <authorList>
            <person name="Setubal J.C."/>
            <person name="Bowns C."/>
            <person name="Boyle S."/>
            <person name="Crasta O.R."/>
            <person name="Czar M.J."/>
            <person name="Dharmanolla C."/>
            <person name="Gillespie J.J."/>
            <person name="Kenyon R.W."/>
            <person name="Lu J."/>
            <person name="Mane S."/>
            <person name="Mohapatra S."/>
            <person name="Nagrani S."/>
            <person name="Purkayastha A."/>
            <person name="Rajasimha H.K."/>
            <person name="Shallom J.M."/>
            <person name="Shallom S."/>
            <person name="Shukla M."/>
            <person name="Snyder E.E."/>
            <person name="Sobral B.W."/>
            <person name="Wattam A.R."/>
            <person name="Will R."/>
            <person name="Williams K."/>
            <person name="Yoo H."/>
            <person name="Bruce D."/>
            <person name="Detter C."/>
            <person name="Munk C."/>
            <person name="Brettin T.S."/>
        </authorList>
    </citation>
    <scope>NUCLEOTIDE SEQUENCE [LARGE SCALE GENOMIC DNA]</scope>
    <source>
        <strain>ATCC 23365 / NCTC 10854 / RM-666</strain>
    </source>
</reference>
<sequence>MTQKNGPLRVGIGGPVGSGKTTLTEKLCKAMRDKYSVAVITNDIYTQEDALILARRQALSEDRIIGVETGGCPHTAIREDASINLQAVVEMTRRFPDLDVVFIESGGDNLAATFSPDLADLTLYVISVCQGEEIPRKGGPGITRSDFLVINKSDLAPYVHVDLEVMEADAMRMRAKRPFGFTDLHRGKGVQEIIDFIVENGGLEPRSN</sequence>
<evidence type="ECO:0000255" key="1">
    <source>
        <dbReference type="HAMAP-Rule" id="MF_01389"/>
    </source>
</evidence>
<organism>
    <name type="scientific">Brucella canis (strain ATCC 23365 / NCTC 10854 / RM-666)</name>
    <dbReference type="NCBI Taxonomy" id="483179"/>
    <lineage>
        <taxon>Bacteria</taxon>
        <taxon>Pseudomonadati</taxon>
        <taxon>Pseudomonadota</taxon>
        <taxon>Alphaproteobacteria</taxon>
        <taxon>Hyphomicrobiales</taxon>
        <taxon>Brucellaceae</taxon>
        <taxon>Brucella/Ochrobactrum group</taxon>
        <taxon>Brucella</taxon>
    </lineage>
</organism>
<accession>A9M7V8</accession>
<protein>
    <recommendedName>
        <fullName evidence="1">Urease accessory protein UreG 1</fullName>
    </recommendedName>
</protein>
<gene>
    <name evidence="1" type="primary">ureG1</name>
    <name type="ordered locus">BCAN_A0276</name>
</gene>
<feature type="chain" id="PRO_0000347358" description="Urease accessory protein UreG 1">
    <location>
        <begin position="1"/>
        <end position="208"/>
    </location>
</feature>
<feature type="binding site" evidence="1">
    <location>
        <begin position="11"/>
        <end position="18"/>
    </location>
    <ligand>
        <name>GTP</name>
        <dbReference type="ChEBI" id="CHEBI:37565"/>
    </ligand>
</feature>